<feature type="chain" id="PRO_0000180500" description="DNA primase">
    <location>
        <begin position="1"/>
        <end position="626"/>
    </location>
</feature>
<feature type="domain" description="Toprim" evidence="1">
    <location>
        <begin position="264"/>
        <end position="346"/>
    </location>
</feature>
<feature type="zinc finger region" description="CHC2-type" evidence="1">
    <location>
        <begin position="39"/>
        <end position="63"/>
    </location>
</feature>
<feature type="binding site" evidence="1">
    <location>
        <position position="270"/>
    </location>
    <ligand>
        <name>Mg(2+)</name>
        <dbReference type="ChEBI" id="CHEBI:18420"/>
        <label>1</label>
        <note>catalytic</note>
    </ligand>
</feature>
<feature type="binding site" evidence="1">
    <location>
        <position position="314"/>
    </location>
    <ligand>
        <name>Mg(2+)</name>
        <dbReference type="ChEBI" id="CHEBI:18420"/>
        <label>1</label>
        <note>catalytic</note>
    </ligand>
</feature>
<feature type="binding site" evidence="1">
    <location>
        <position position="314"/>
    </location>
    <ligand>
        <name>Mg(2+)</name>
        <dbReference type="ChEBI" id="CHEBI:18420"/>
        <label>2</label>
    </ligand>
</feature>
<feature type="binding site" evidence="1">
    <location>
        <position position="316"/>
    </location>
    <ligand>
        <name>Mg(2+)</name>
        <dbReference type="ChEBI" id="CHEBI:18420"/>
        <label>2</label>
    </ligand>
</feature>
<feature type="sequence conflict" description="In Ref. 1; AAC43305." evidence="2" ref="1">
    <original>I</original>
    <variation>M</variation>
    <location>
        <position position="57"/>
    </location>
</feature>
<feature type="sequence conflict" description="In Ref. 1; AAC43305." evidence="2" ref="1">
    <original>S</original>
    <variation>A</variation>
    <location>
        <position position="174"/>
    </location>
</feature>
<feature type="sequence conflict" description="In Ref. 1; AAC43305." evidence="2" ref="1">
    <original>A</original>
    <variation>R</variation>
    <location>
        <position position="188"/>
    </location>
</feature>
<feature type="sequence conflict" description="In Ref. 1; AAC43305." evidence="2" ref="1">
    <original>K</original>
    <variation>R</variation>
    <location>
        <position position="382"/>
    </location>
</feature>
<feature type="sequence conflict" description="In Ref. 1; AAC43305." evidence="2" ref="1">
    <original>E</original>
    <variation>D</variation>
    <location>
        <position position="391"/>
    </location>
</feature>
<feature type="sequence conflict" description="In Ref. 1; AAC43305." evidence="2" ref="1">
    <original>G</original>
    <variation>S</variation>
    <location>
        <position position="394"/>
    </location>
</feature>
<feature type="sequence conflict" description="In Ref. 1; AAC43305." evidence="2" ref="1">
    <original>GA</original>
    <variation>ET</variation>
    <location>
        <begin position="467"/>
        <end position="468"/>
    </location>
</feature>
<feature type="sequence conflict" description="In Ref. 1; AAC43305." evidence="2" ref="1">
    <original>A</original>
    <variation>T</variation>
    <location>
        <position position="478"/>
    </location>
</feature>
<feature type="sequence conflict" description="In Ref. 1; AAC43305." evidence="2" ref="1">
    <original>I</original>
    <variation>T</variation>
    <location>
        <position position="486"/>
    </location>
</feature>
<feature type="sequence conflict" description="In Ref. 1; AAC43305." evidence="2" ref="1">
    <original>E</original>
    <variation>K</variation>
    <location>
        <position position="520"/>
    </location>
</feature>
<feature type="sequence conflict" description="In Ref. 1; AAC43305." evidence="2" ref="1">
    <original>A</original>
    <variation>T</variation>
    <location>
        <position position="549"/>
    </location>
</feature>
<feature type="sequence conflict" description="In Ref. 1; AAC43305." evidence="2" ref="1">
    <original>P</original>
    <variation>T</variation>
    <location>
        <position position="569"/>
    </location>
</feature>
<feature type="sequence conflict" description="In Ref. 1; AAC43305." evidence="2" ref="1">
    <original>Y</original>
    <variation>F</variation>
    <location>
        <position position="581"/>
    </location>
</feature>
<feature type="sequence conflict" description="In Ref. 1; AAC43305." evidence="2" ref="1">
    <original>Y</original>
    <variation>L</variation>
    <location>
        <position position="597"/>
    </location>
</feature>
<feature type="sequence conflict" description="In Ref. 1; AAC43305." evidence="2" ref="1">
    <original>NE</original>
    <variation>KD</variation>
    <location>
        <begin position="603"/>
        <end position="604"/>
    </location>
</feature>
<protein>
    <recommendedName>
        <fullName evidence="1">DNA primase</fullName>
        <ecNumber evidence="1">2.7.7.101</ecNumber>
    </recommendedName>
</protein>
<evidence type="ECO:0000255" key="1">
    <source>
        <dbReference type="HAMAP-Rule" id="MF_00974"/>
    </source>
</evidence>
<evidence type="ECO:0000305" key="2"/>
<sequence length="626" mass="71756">MARIPEEVIDQVRNQADIVDIIGNYVQLKKQGRNYSGLCPFHGEKTPSFSVSPEKQIFHCFGCGKGGNVFSFLMEHDGLTFVESVKKVADMSHLDVAIELPEERDTSNLPKETSETAKMVEMHQLTAKLYHYILMETEEGTAALTYLKERGMSEQMMTTFQIGFAPNHHATITSFLEKRGMDLQLAGAAGLLSERDDGQMVDRFRNRIMFPITNDRGQIIAFSGRLFDRDDGPKYLNSPETPVFNKRRILFHFSEARQAIRKQEEITLMEGFMDVISAEEAGVQNAVASMGTSLTEEHADLIKRLTNRAIICYDGDRAGIEAAYKAGTLLVERNRLDVFVLQLPAGKDPDDFIRASGPEKFKEVYKQQRMTWTAFKIHYLRKERNLQNETEQIGYIDDCLREIAKLDQAVERELYLKQLADEFELTIETLKQQLQQSLKNSQKSRQMASYNEPPIDDSFMGMMPQEGAEMLFSFEQPAQKLSAHTISEQQLMKAMMESRDNFLLIKQLLGDTTFYHDNYEALYTYLIGYFAEGNDADPTKFMDSVPDAAMKGLISSLEMVISPDEQGKPQFEDYIRSLKRYKLEQKKKELEQELATYNRENDNENEIRVMLEIVQLNRQLNSGQLD</sequence>
<organism>
    <name type="scientific">Listeria monocytogenes serovar 1/2a (strain ATCC BAA-679 / EGD-e)</name>
    <dbReference type="NCBI Taxonomy" id="169963"/>
    <lineage>
        <taxon>Bacteria</taxon>
        <taxon>Bacillati</taxon>
        <taxon>Bacillota</taxon>
        <taxon>Bacilli</taxon>
        <taxon>Bacillales</taxon>
        <taxon>Listeriaceae</taxon>
        <taxon>Listeria</taxon>
    </lineage>
</organism>
<accession>P47762</accession>
<dbReference type="EC" id="2.7.7.101" evidence="1"/>
<dbReference type="EMBL" id="U13165">
    <property type="protein sequence ID" value="AAC43305.1"/>
    <property type="molecule type" value="Genomic_DNA"/>
</dbReference>
<dbReference type="EMBL" id="AL591979">
    <property type="protein sequence ID" value="CAC99533.1"/>
    <property type="molecule type" value="Genomic_DNA"/>
</dbReference>
<dbReference type="PIR" id="AG1256">
    <property type="entry name" value="AG1256"/>
</dbReference>
<dbReference type="RefSeq" id="NP_464980.1">
    <property type="nucleotide sequence ID" value="NC_003210.1"/>
</dbReference>
<dbReference type="RefSeq" id="WP_010990130.1">
    <property type="nucleotide sequence ID" value="NZ_CP149495.1"/>
</dbReference>
<dbReference type="SMR" id="P47762"/>
<dbReference type="STRING" id="169963.gene:17594112"/>
<dbReference type="PaxDb" id="169963-lmo1455"/>
<dbReference type="EnsemblBacteria" id="CAC99533">
    <property type="protein sequence ID" value="CAC99533"/>
    <property type="gene ID" value="CAC99533"/>
</dbReference>
<dbReference type="GeneID" id="986564"/>
<dbReference type="KEGG" id="lmo:lmo1455"/>
<dbReference type="PATRIC" id="fig|169963.11.peg.1494"/>
<dbReference type="eggNOG" id="COG0305">
    <property type="taxonomic scope" value="Bacteria"/>
</dbReference>
<dbReference type="eggNOG" id="COG0358">
    <property type="taxonomic scope" value="Bacteria"/>
</dbReference>
<dbReference type="HOGENOM" id="CLU_013501_3_3_9"/>
<dbReference type="OrthoDB" id="9803773at2"/>
<dbReference type="PhylomeDB" id="P47762"/>
<dbReference type="BioCyc" id="LMON169963:LMO1455-MONOMER"/>
<dbReference type="Proteomes" id="UP000000817">
    <property type="component" value="Chromosome"/>
</dbReference>
<dbReference type="GO" id="GO:0005737">
    <property type="term" value="C:cytoplasm"/>
    <property type="evidence" value="ECO:0000318"/>
    <property type="project" value="GO_Central"/>
</dbReference>
<dbReference type="GO" id="GO:0000428">
    <property type="term" value="C:DNA-directed RNA polymerase complex"/>
    <property type="evidence" value="ECO:0007669"/>
    <property type="project" value="UniProtKB-KW"/>
</dbReference>
<dbReference type="GO" id="GO:1990077">
    <property type="term" value="C:primosome complex"/>
    <property type="evidence" value="ECO:0007669"/>
    <property type="project" value="UniProtKB-KW"/>
</dbReference>
<dbReference type="GO" id="GO:0003677">
    <property type="term" value="F:DNA binding"/>
    <property type="evidence" value="ECO:0007669"/>
    <property type="project" value="UniProtKB-KW"/>
</dbReference>
<dbReference type="GO" id="GO:0003899">
    <property type="term" value="F:DNA-directed RNA polymerase activity"/>
    <property type="evidence" value="ECO:0007669"/>
    <property type="project" value="InterPro"/>
</dbReference>
<dbReference type="GO" id="GO:0008270">
    <property type="term" value="F:zinc ion binding"/>
    <property type="evidence" value="ECO:0007669"/>
    <property type="project" value="UniProtKB-UniRule"/>
</dbReference>
<dbReference type="GO" id="GO:0006269">
    <property type="term" value="P:DNA replication, synthesis of primer"/>
    <property type="evidence" value="ECO:0000318"/>
    <property type="project" value="GO_Central"/>
</dbReference>
<dbReference type="CDD" id="cd03364">
    <property type="entry name" value="TOPRIM_DnaG_primases"/>
    <property type="match status" value="1"/>
</dbReference>
<dbReference type="FunFam" id="3.90.580.10:FF:000001">
    <property type="entry name" value="DNA primase"/>
    <property type="match status" value="1"/>
</dbReference>
<dbReference type="FunFam" id="3.90.980.10:FF:000001">
    <property type="entry name" value="DNA primase"/>
    <property type="match status" value="1"/>
</dbReference>
<dbReference type="Gene3D" id="3.40.1360.10">
    <property type="match status" value="1"/>
</dbReference>
<dbReference type="Gene3D" id="3.90.980.10">
    <property type="entry name" value="DNA primase, catalytic core, N-terminal domain"/>
    <property type="match status" value="1"/>
</dbReference>
<dbReference type="Gene3D" id="1.10.860.10">
    <property type="entry name" value="DNAb Helicase, Chain A"/>
    <property type="match status" value="1"/>
</dbReference>
<dbReference type="Gene3D" id="3.90.580.10">
    <property type="entry name" value="Zinc finger, CHC2-type domain"/>
    <property type="match status" value="1"/>
</dbReference>
<dbReference type="HAMAP" id="MF_00974">
    <property type="entry name" value="DNA_primase_DnaG"/>
    <property type="match status" value="1"/>
</dbReference>
<dbReference type="InterPro" id="IPR016136">
    <property type="entry name" value="DNA_helicase_N/primase_C"/>
</dbReference>
<dbReference type="InterPro" id="IPR037068">
    <property type="entry name" value="DNA_primase_core_N_sf"/>
</dbReference>
<dbReference type="InterPro" id="IPR019475">
    <property type="entry name" value="DNA_primase_DnaB-bd"/>
</dbReference>
<dbReference type="InterPro" id="IPR006295">
    <property type="entry name" value="DNA_primase_DnaG"/>
</dbReference>
<dbReference type="InterPro" id="IPR036977">
    <property type="entry name" value="DNA_primase_Znf_CHC2"/>
</dbReference>
<dbReference type="InterPro" id="IPR030846">
    <property type="entry name" value="DnaG_bac"/>
</dbReference>
<dbReference type="InterPro" id="IPR013264">
    <property type="entry name" value="DNAG_N"/>
</dbReference>
<dbReference type="InterPro" id="IPR050219">
    <property type="entry name" value="DnaG_primase"/>
</dbReference>
<dbReference type="InterPro" id="IPR034151">
    <property type="entry name" value="TOPRIM_DnaG_bac"/>
</dbReference>
<dbReference type="InterPro" id="IPR006171">
    <property type="entry name" value="TOPRIM_dom"/>
</dbReference>
<dbReference type="InterPro" id="IPR002694">
    <property type="entry name" value="Znf_CHC2"/>
</dbReference>
<dbReference type="NCBIfam" id="TIGR01391">
    <property type="entry name" value="dnaG"/>
    <property type="match status" value="1"/>
</dbReference>
<dbReference type="PANTHER" id="PTHR30313">
    <property type="entry name" value="DNA PRIMASE"/>
    <property type="match status" value="1"/>
</dbReference>
<dbReference type="PANTHER" id="PTHR30313:SF2">
    <property type="entry name" value="DNA PRIMASE"/>
    <property type="match status" value="1"/>
</dbReference>
<dbReference type="Pfam" id="PF10410">
    <property type="entry name" value="DnaB_bind"/>
    <property type="match status" value="1"/>
</dbReference>
<dbReference type="Pfam" id="PF08275">
    <property type="entry name" value="DNAG_N"/>
    <property type="match status" value="1"/>
</dbReference>
<dbReference type="Pfam" id="PF13155">
    <property type="entry name" value="Toprim_2"/>
    <property type="match status" value="1"/>
</dbReference>
<dbReference type="Pfam" id="PF01807">
    <property type="entry name" value="Zn_ribbon_DnaG"/>
    <property type="match status" value="1"/>
</dbReference>
<dbReference type="PIRSF" id="PIRSF002811">
    <property type="entry name" value="DnaG"/>
    <property type="match status" value="1"/>
</dbReference>
<dbReference type="SMART" id="SM00493">
    <property type="entry name" value="TOPRIM"/>
    <property type="match status" value="1"/>
</dbReference>
<dbReference type="SMART" id="SM00400">
    <property type="entry name" value="ZnF_CHCC"/>
    <property type="match status" value="1"/>
</dbReference>
<dbReference type="SUPFAM" id="SSF56731">
    <property type="entry name" value="DNA primase core"/>
    <property type="match status" value="1"/>
</dbReference>
<dbReference type="SUPFAM" id="SSF57783">
    <property type="entry name" value="Zinc beta-ribbon"/>
    <property type="match status" value="1"/>
</dbReference>
<dbReference type="PROSITE" id="PS50880">
    <property type="entry name" value="TOPRIM"/>
    <property type="match status" value="1"/>
</dbReference>
<reference key="1">
    <citation type="journal article" date="1994" name="Gene">
        <title>Characterization of the macromolecular synthesis (MMS) operon from Listeria monocytogenes.</title>
        <authorList>
            <person name="Metzger R."/>
            <person name="Brown D.P."/>
            <person name="Grealish P."/>
            <person name="Staver M.J."/>
            <person name="Versalovic J."/>
            <person name="Lupski J.R."/>
            <person name="Katz L."/>
        </authorList>
    </citation>
    <scope>NUCLEOTIDE SEQUENCE [GENOMIC DNA]</scope>
    <source>
        <strain>ATCC 13932 / LMG 21264 / NCTC 10527 / SLCC 2375</strain>
    </source>
</reference>
<reference key="2">
    <citation type="journal article" date="2001" name="Science">
        <title>Comparative genomics of Listeria species.</title>
        <authorList>
            <person name="Glaser P."/>
            <person name="Frangeul L."/>
            <person name="Buchrieser C."/>
            <person name="Rusniok C."/>
            <person name="Amend A."/>
            <person name="Baquero F."/>
            <person name="Berche P."/>
            <person name="Bloecker H."/>
            <person name="Brandt P."/>
            <person name="Chakraborty T."/>
            <person name="Charbit A."/>
            <person name="Chetouani F."/>
            <person name="Couve E."/>
            <person name="de Daruvar A."/>
            <person name="Dehoux P."/>
            <person name="Domann E."/>
            <person name="Dominguez-Bernal G."/>
            <person name="Duchaud E."/>
            <person name="Durant L."/>
            <person name="Dussurget O."/>
            <person name="Entian K.-D."/>
            <person name="Fsihi H."/>
            <person name="Garcia-del Portillo F."/>
            <person name="Garrido P."/>
            <person name="Gautier L."/>
            <person name="Goebel W."/>
            <person name="Gomez-Lopez N."/>
            <person name="Hain T."/>
            <person name="Hauf J."/>
            <person name="Jackson D."/>
            <person name="Jones L.-M."/>
            <person name="Kaerst U."/>
            <person name="Kreft J."/>
            <person name="Kuhn M."/>
            <person name="Kunst F."/>
            <person name="Kurapkat G."/>
            <person name="Madueno E."/>
            <person name="Maitournam A."/>
            <person name="Mata Vicente J."/>
            <person name="Ng E."/>
            <person name="Nedjari H."/>
            <person name="Nordsiek G."/>
            <person name="Novella S."/>
            <person name="de Pablos B."/>
            <person name="Perez-Diaz J.-C."/>
            <person name="Purcell R."/>
            <person name="Remmel B."/>
            <person name="Rose M."/>
            <person name="Schlueter T."/>
            <person name="Simoes N."/>
            <person name="Tierrez A."/>
            <person name="Vazquez-Boland J.-A."/>
            <person name="Voss H."/>
            <person name="Wehland J."/>
            <person name="Cossart P."/>
        </authorList>
    </citation>
    <scope>NUCLEOTIDE SEQUENCE [LARGE SCALE GENOMIC DNA]</scope>
    <source>
        <strain>ATCC BAA-679 / EGD-e</strain>
    </source>
</reference>
<comment type="function">
    <text evidence="1">RNA polymerase that catalyzes the synthesis of short RNA molecules used as primers for DNA polymerase during DNA replication.</text>
</comment>
<comment type="catalytic activity">
    <reaction evidence="1">
        <text>ssDNA + n NTP = ssDNA/pppN(pN)n-1 hybrid + (n-1) diphosphate.</text>
        <dbReference type="EC" id="2.7.7.101"/>
    </reaction>
</comment>
<comment type="cofactor">
    <cofactor evidence="1">
        <name>Zn(2+)</name>
        <dbReference type="ChEBI" id="CHEBI:29105"/>
    </cofactor>
    <text evidence="1">Binds 1 zinc ion per monomer.</text>
</comment>
<comment type="cofactor">
    <cofactor evidence="1">
        <name>Mg(2+)</name>
        <dbReference type="ChEBI" id="CHEBI:18420"/>
    </cofactor>
    <text evidence="1">Binds two Mg(2+) per subunit.</text>
</comment>
<comment type="subunit">
    <text evidence="1">Monomer. Interacts with DnaB.</text>
</comment>
<comment type="domain">
    <text evidence="1">Contains an N-terminal zinc-binding domain, a central core domain that contains the primase activity, and a C-terminal DnaB-binding domain.</text>
</comment>
<comment type="similarity">
    <text evidence="1">Belongs to the DnaG primase family.</text>
</comment>
<keyword id="KW-0235">DNA replication</keyword>
<keyword id="KW-0238">DNA-binding</keyword>
<keyword id="KW-0240">DNA-directed RNA polymerase</keyword>
<keyword id="KW-0460">Magnesium</keyword>
<keyword id="KW-0479">Metal-binding</keyword>
<keyword id="KW-0548">Nucleotidyltransferase</keyword>
<keyword id="KW-0639">Primosome</keyword>
<keyword id="KW-1185">Reference proteome</keyword>
<keyword id="KW-0804">Transcription</keyword>
<keyword id="KW-0808">Transferase</keyword>
<keyword id="KW-0862">Zinc</keyword>
<keyword id="KW-0863">Zinc-finger</keyword>
<name>DNAG_LISMO</name>
<gene>
    <name evidence="1" type="primary">dnaG</name>
    <name type="ordered locus">lmo1455</name>
</gene>
<proteinExistence type="inferred from homology"/>